<accession>Q5W6B9</accession>
<accession>A0A0N7KKF6</accession>
<accession>B9FNK2</accession>
<keyword id="KW-1003">Cell membrane</keyword>
<keyword id="KW-1015">Disulfide bond</keyword>
<keyword id="KW-0256">Endoplasmic reticulum</keyword>
<keyword id="KW-0278">Fertilization</keyword>
<keyword id="KW-0446">Lipid-binding</keyword>
<keyword id="KW-0472">Membrane</keyword>
<keyword id="KW-1185">Reference proteome</keyword>
<keyword id="KW-0732">Signal</keyword>
<keyword id="KW-0812">Transmembrane</keyword>
<keyword id="KW-1133">Transmembrane helix</keyword>
<reference key="1">
    <citation type="journal article" date="2005" name="Mol. Genet. Genomics">
        <title>A fine physical map of the rice chromosome 5.</title>
        <authorList>
            <person name="Cheng C.-H."/>
            <person name="Chung M.C."/>
            <person name="Liu S.-M."/>
            <person name="Chen S.-K."/>
            <person name="Kao F.Y."/>
            <person name="Lin S.-J."/>
            <person name="Hsiao S.-H."/>
            <person name="Tseng I.C."/>
            <person name="Hsing Y.-I.C."/>
            <person name="Wu H.-P."/>
            <person name="Chen C.-S."/>
            <person name="Shaw J.-F."/>
            <person name="Wu J."/>
            <person name="Matsumoto T."/>
            <person name="Sasaki T."/>
            <person name="Chen H.-C."/>
            <person name="Chow T.-Y."/>
        </authorList>
    </citation>
    <scope>NUCLEOTIDE SEQUENCE [LARGE SCALE GENOMIC DNA]</scope>
    <source>
        <strain>cv. Nipponbare</strain>
    </source>
</reference>
<reference key="2">
    <citation type="journal article" date="2005" name="Nature">
        <title>The map-based sequence of the rice genome.</title>
        <authorList>
            <consortium name="International rice genome sequencing project (IRGSP)"/>
        </authorList>
    </citation>
    <scope>NUCLEOTIDE SEQUENCE [LARGE SCALE GENOMIC DNA]</scope>
    <source>
        <strain>cv. Nipponbare</strain>
    </source>
</reference>
<reference key="3">
    <citation type="journal article" date="2008" name="Nucleic Acids Res.">
        <title>The rice annotation project database (RAP-DB): 2008 update.</title>
        <authorList>
            <consortium name="The rice annotation project (RAP)"/>
        </authorList>
    </citation>
    <scope>GENOME REANNOTATION</scope>
    <source>
        <strain>cv. Nipponbare</strain>
    </source>
</reference>
<reference key="4">
    <citation type="journal article" date="2013" name="Rice">
        <title>Improvement of the Oryza sativa Nipponbare reference genome using next generation sequence and optical map data.</title>
        <authorList>
            <person name="Kawahara Y."/>
            <person name="de la Bastide M."/>
            <person name="Hamilton J.P."/>
            <person name="Kanamori H."/>
            <person name="McCombie W.R."/>
            <person name="Ouyang S."/>
            <person name="Schwartz D.C."/>
            <person name="Tanaka T."/>
            <person name="Wu J."/>
            <person name="Zhou S."/>
            <person name="Childs K.L."/>
            <person name="Davidson R.M."/>
            <person name="Lin H."/>
            <person name="Quesada-Ocampo L."/>
            <person name="Vaillancourt B."/>
            <person name="Sakai H."/>
            <person name="Lee S.S."/>
            <person name="Kim J."/>
            <person name="Numa H."/>
            <person name="Itoh T."/>
            <person name="Buell C.R."/>
            <person name="Matsumoto T."/>
        </authorList>
    </citation>
    <scope>GENOME REANNOTATION</scope>
    <source>
        <strain>cv. Nipponbare</strain>
    </source>
</reference>
<reference key="5">
    <citation type="journal article" date="2005" name="PLoS Biol.">
        <title>The genomes of Oryza sativa: a history of duplications.</title>
        <authorList>
            <person name="Yu J."/>
            <person name="Wang J."/>
            <person name="Lin W."/>
            <person name="Li S."/>
            <person name="Li H."/>
            <person name="Zhou J."/>
            <person name="Ni P."/>
            <person name="Dong W."/>
            <person name="Hu S."/>
            <person name="Zeng C."/>
            <person name="Zhang J."/>
            <person name="Zhang Y."/>
            <person name="Li R."/>
            <person name="Xu Z."/>
            <person name="Li S."/>
            <person name="Li X."/>
            <person name="Zheng H."/>
            <person name="Cong L."/>
            <person name="Lin L."/>
            <person name="Yin J."/>
            <person name="Geng J."/>
            <person name="Li G."/>
            <person name="Shi J."/>
            <person name="Liu J."/>
            <person name="Lv H."/>
            <person name="Li J."/>
            <person name="Wang J."/>
            <person name="Deng Y."/>
            <person name="Ran L."/>
            <person name="Shi X."/>
            <person name="Wang X."/>
            <person name="Wu Q."/>
            <person name="Li C."/>
            <person name="Ren X."/>
            <person name="Wang J."/>
            <person name="Wang X."/>
            <person name="Li D."/>
            <person name="Liu D."/>
            <person name="Zhang X."/>
            <person name="Ji Z."/>
            <person name="Zhao W."/>
            <person name="Sun Y."/>
            <person name="Zhang Z."/>
            <person name="Bao J."/>
            <person name="Han Y."/>
            <person name="Dong L."/>
            <person name="Ji J."/>
            <person name="Chen P."/>
            <person name="Wu S."/>
            <person name="Liu J."/>
            <person name="Xiao Y."/>
            <person name="Bu D."/>
            <person name="Tan J."/>
            <person name="Yang L."/>
            <person name="Ye C."/>
            <person name="Zhang J."/>
            <person name="Xu J."/>
            <person name="Zhou Y."/>
            <person name="Yu Y."/>
            <person name="Zhang B."/>
            <person name="Zhuang S."/>
            <person name="Wei H."/>
            <person name="Liu B."/>
            <person name="Lei M."/>
            <person name="Yu H."/>
            <person name="Li Y."/>
            <person name="Xu H."/>
            <person name="Wei S."/>
            <person name="He X."/>
            <person name="Fang L."/>
            <person name="Zhang Z."/>
            <person name="Zhang Y."/>
            <person name="Huang X."/>
            <person name="Su Z."/>
            <person name="Tong W."/>
            <person name="Li J."/>
            <person name="Tong Z."/>
            <person name="Li S."/>
            <person name="Ye J."/>
            <person name="Wang L."/>
            <person name="Fang L."/>
            <person name="Lei T."/>
            <person name="Chen C.-S."/>
            <person name="Chen H.-C."/>
            <person name="Xu Z."/>
            <person name="Li H."/>
            <person name="Huang H."/>
            <person name="Zhang F."/>
            <person name="Xu H."/>
            <person name="Li N."/>
            <person name="Zhao C."/>
            <person name="Li S."/>
            <person name="Dong L."/>
            <person name="Huang Y."/>
            <person name="Li L."/>
            <person name="Xi Y."/>
            <person name="Qi Q."/>
            <person name="Li W."/>
            <person name="Zhang B."/>
            <person name="Hu W."/>
            <person name="Zhang Y."/>
            <person name="Tian X."/>
            <person name="Jiao Y."/>
            <person name="Liang X."/>
            <person name="Jin J."/>
            <person name="Gao L."/>
            <person name="Zheng W."/>
            <person name="Hao B."/>
            <person name="Liu S.-M."/>
            <person name="Wang W."/>
            <person name="Yuan L."/>
            <person name="Cao M."/>
            <person name="McDermott J."/>
            <person name="Samudrala R."/>
            <person name="Wang J."/>
            <person name="Wong G.K.-S."/>
            <person name="Yang H."/>
        </authorList>
    </citation>
    <scope>NUCLEOTIDE SEQUENCE [LARGE SCALE GENOMIC DNA]</scope>
    <source>
        <strain>cv. Nipponbare</strain>
    </source>
</reference>
<reference key="6">
    <citation type="journal article" date="2003" name="Science">
        <title>Collection, mapping, and annotation of over 28,000 cDNA clones from japonica rice.</title>
        <authorList>
            <consortium name="The rice full-length cDNA consortium"/>
        </authorList>
    </citation>
    <scope>NUCLEOTIDE SEQUENCE [LARGE SCALE MRNA]</scope>
    <source>
        <strain>cv. Nipponbare</strain>
    </source>
</reference>
<reference key="7">
    <citation type="journal article" date="2010" name="PLoS Genet.">
        <title>HAP2(GCS1)-dependent gamete fusion requires a positively charged carboxy-terminal domain.</title>
        <authorList>
            <person name="Wong J.L."/>
            <person name="Leydon A.R."/>
            <person name="Johnson M.A."/>
        </authorList>
    </citation>
    <scope>DOMAIN</scope>
    <scope>FUNCTION</scope>
</reference>
<reference key="8">
    <citation type="journal article" date="2010" name="Trends Cell Biol.">
        <title>Is HAP2-GCS1 an ancestral gamete fusogen?</title>
        <authorList>
            <person name="Wong J.L."/>
            <person name="Johnson M.A."/>
        </authorList>
    </citation>
    <scope>REVIEW</scope>
</reference>
<comment type="function">
    <text evidence="2 5">Required for male fertility. Plays a role in pollen tube guidance and successful gamete attachment. Essential for the fusion of gametes during double fertilization, where one male gamete fuses with the egg to produce a zygote, and another male gamete fuses with the central cell to produce the endosperm (PubMed:20333238). Mediates the fusion of cell membranes. Not required for pollen tube outgrowth (By similarity).</text>
</comment>
<comment type="subcellular location">
    <subcellularLocation>
        <location evidence="2">Endoplasmic reticulum membrane</location>
        <topology evidence="3">Single-pass membrane protein</topology>
    </subcellularLocation>
    <subcellularLocation>
        <location evidence="2">Cell membrane</location>
        <topology evidence="2">Single-pass type I membrane protein</topology>
    </subcellularLocation>
</comment>
<comment type="domain">
    <text evidence="5">The C-terminal domain (583-705) can replace the homologous domain in the Arabidopsis protein, while the N-terminal domain cannot.</text>
</comment>
<comment type="miscellaneous">
    <text evidence="6">HAP2/GCS1 family members mediate membrane fusion between gametes in a broad range of eukaryotes, ranging from algae and higher plants to protozoans and cnidaria, suggesting they are derived from an ancestral gamete fusogen. They function similar to viral fusogens, by inserting part of their extracellular domain into the lipid bilayer of an adjoining cell.</text>
</comment>
<comment type="similarity">
    <text evidence="7">Belongs to the HAP2/GCS1 family.</text>
</comment>
<sequence length="722" mass="81604">MPRRRGTPLPTILLLLAFVGGACGTEILSKSRLESCSHDSDAGGRLKCDRKLVVDLAVPSGASGGEASLVARVAGVEEENDTPSATKSIRDPPVITVSKSATYALYALTYLDRDVAYRPDEKYVKTHKCEPYAGAKVVGECERLWDEKGNVIKQTEPICCPCGPHRVQSKCGDIWSKLTKGKANTAHCVRFPGDWFHVFGIGAWSLRFSIRVQVKKGSSVWDVVVGPENKTVVSGDNFLRVKVVGDYTGYTSIPSFEDNYLVTPRKGTGSSQPQDLGNEHSKWMILDRVRFTLDGLECDKIGVGYEAYRNQPNFCSAPYGSCLGNQLWNFWEYDKRRIDNSQLPLYIVEGRFQRINQHPNAGAHTFSVGVTEDLNTNLLIELMADDIEYVYQRSPAKIIDIRVPTFEALSQVGIANVTTKNIGKLESSYSLTFKCSSGISPVEEQLYTMKPDEVIARSFELRSTTDQAAMHQCEAILKASDFSELDREGYRFSTAATVYNNGAQIGPTNDHKKGGFWDSIKALWRNLIDFLTGRLCWTKCPRLFDFGCHIQYVCIGWILLLLLIPAAVVFLWLLHQEGLFDPLYDWWGLEPDDDYRARRRHQKGRHHRHHHDHRHRHGHSHGDHHHHYHGGHHQRRRHHHPPAWDVEGHHHDRQQHSHEAGRNHHRGYGEVVAAGAAPLRLDRASRPGQTEVDAVVEYRERRSRHERHGGHGHRDGHYSPSV</sequence>
<dbReference type="EMBL" id="AC136522">
    <property type="protein sequence ID" value="AAV43963.1"/>
    <property type="molecule type" value="Genomic_DNA"/>
</dbReference>
<dbReference type="EMBL" id="AP008211">
    <property type="protein sequence ID" value="BAF16968.1"/>
    <property type="molecule type" value="Genomic_DNA"/>
</dbReference>
<dbReference type="EMBL" id="AP014961">
    <property type="protein sequence ID" value="BAS93081.1"/>
    <property type="molecule type" value="Genomic_DNA"/>
</dbReference>
<dbReference type="EMBL" id="CM000142">
    <property type="protein sequence ID" value="EEE63042.1"/>
    <property type="molecule type" value="Genomic_DNA"/>
</dbReference>
<dbReference type="EMBL" id="AK072871">
    <property type="protein sequence ID" value="BAG93181.1"/>
    <property type="molecule type" value="mRNA"/>
</dbReference>
<dbReference type="RefSeq" id="XP_015638244.1">
    <property type="nucleotide sequence ID" value="XM_015782758.1"/>
</dbReference>
<dbReference type="SMR" id="Q5W6B9"/>
<dbReference type="STRING" id="39947.Q5W6B9"/>
<dbReference type="PaxDb" id="39947-Q5W6B9"/>
<dbReference type="EnsemblPlants" id="Os05t0269500-01">
    <property type="protein sequence ID" value="Os05t0269500-01"/>
    <property type="gene ID" value="Os05g0269500"/>
</dbReference>
<dbReference type="Gramene" id="Os05t0269500-01">
    <property type="protein sequence ID" value="Os05t0269500-01"/>
    <property type="gene ID" value="Os05g0269500"/>
</dbReference>
<dbReference type="KEGG" id="dosa:Os05g0269500"/>
<dbReference type="eggNOG" id="ENOG502QREH">
    <property type="taxonomic scope" value="Eukaryota"/>
</dbReference>
<dbReference type="HOGENOM" id="CLU_022353_1_0_1"/>
<dbReference type="InParanoid" id="Q5W6B9"/>
<dbReference type="OMA" id="YRYPLFY"/>
<dbReference type="OrthoDB" id="272303at2759"/>
<dbReference type="Proteomes" id="UP000000763">
    <property type="component" value="Chromosome 5"/>
</dbReference>
<dbReference type="Proteomes" id="UP000007752">
    <property type="component" value="Chromosome 5"/>
</dbReference>
<dbReference type="Proteomes" id="UP000059680">
    <property type="component" value="Chromosome 5"/>
</dbReference>
<dbReference type="GO" id="GO:0005789">
    <property type="term" value="C:endoplasmic reticulum membrane"/>
    <property type="evidence" value="ECO:0007669"/>
    <property type="project" value="UniProtKB-SubCell"/>
</dbReference>
<dbReference type="GO" id="GO:0005886">
    <property type="term" value="C:plasma membrane"/>
    <property type="evidence" value="ECO:0007669"/>
    <property type="project" value="UniProtKB-SubCell"/>
</dbReference>
<dbReference type="GO" id="GO:0008289">
    <property type="term" value="F:lipid binding"/>
    <property type="evidence" value="ECO:0007669"/>
    <property type="project" value="UniProtKB-KW"/>
</dbReference>
<dbReference type="InterPro" id="IPR040326">
    <property type="entry name" value="HAP2/GCS1"/>
</dbReference>
<dbReference type="InterPro" id="IPR018928">
    <property type="entry name" value="HAP2/GCS1_dom"/>
</dbReference>
<dbReference type="PANTHER" id="PTHR31764:SF0">
    <property type="entry name" value="GENERATIVE CELL SPECIFIC-1_HAP2 DOMAIN-CONTAINING PROTEIN"/>
    <property type="match status" value="1"/>
</dbReference>
<dbReference type="PANTHER" id="PTHR31764">
    <property type="entry name" value="PROTEIN HAPLESS 2"/>
    <property type="match status" value="1"/>
</dbReference>
<dbReference type="Pfam" id="PF10699">
    <property type="entry name" value="HAP2-GCS1"/>
    <property type="match status" value="1"/>
</dbReference>
<name>HAP2A_ORYSJ</name>
<gene>
    <name type="primary">HAP2A</name>
    <name type="ordered locus">Os05g0269500</name>
    <name type="ordered locus">LOC_Os05g18730</name>
    <name type="ORF">OsJ_17850</name>
    <name type="ORF">OSJNBa0037H03.12</name>
</gene>
<feature type="signal peptide" evidence="3">
    <location>
        <begin position="1"/>
        <end position="24"/>
    </location>
</feature>
<feature type="chain" id="PRO_0000416781" description="Protein HAPLESS 2-A">
    <location>
        <begin position="25"/>
        <end position="722"/>
    </location>
</feature>
<feature type="topological domain" description="Extracellular" evidence="3">
    <location>
        <begin position="25"/>
        <end position="552"/>
    </location>
</feature>
<feature type="transmembrane region" description="Helical" evidence="3">
    <location>
        <begin position="553"/>
        <end position="573"/>
    </location>
</feature>
<feature type="topological domain" description="Cytoplasmic" evidence="3">
    <location>
        <begin position="574"/>
        <end position="722"/>
    </location>
</feature>
<feature type="region of interest" description="Disordered" evidence="4">
    <location>
        <begin position="598"/>
        <end position="665"/>
    </location>
</feature>
<feature type="region of interest" description="Disordered" evidence="4">
    <location>
        <begin position="680"/>
        <end position="722"/>
    </location>
</feature>
<feature type="compositionally biased region" description="Basic residues" evidence="4">
    <location>
        <begin position="598"/>
        <end position="641"/>
    </location>
</feature>
<feature type="compositionally biased region" description="Basic and acidic residues" evidence="4">
    <location>
        <begin position="646"/>
        <end position="662"/>
    </location>
</feature>
<feature type="compositionally biased region" description="Basic residues" evidence="4">
    <location>
        <begin position="701"/>
        <end position="711"/>
    </location>
</feature>
<feature type="compositionally biased region" description="Basic and acidic residues" evidence="4">
    <location>
        <begin position="712"/>
        <end position="722"/>
    </location>
</feature>
<feature type="disulfide bond" evidence="1">
    <location>
        <begin position="36"/>
        <end position="48"/>
    </location>
</feature>
<feature type="disulfide bond" evidence="1">
    <location>
        <begin position="129"/>
        <end position="159"/>
    </location>
</feature>
<feature type="disulfide bond" evidence="1">
    <location>
        <begin position="141"/>
        <end position="188"/>
    </location>
</feature>
<feature type="disulfide bond" evidence="1">
    <location>
        <begin position="160"/>
        <end position="315"/>
    </location>
</feature>
<feature type="disulfide bond" evidence="1">
    <location>
        <begin position="162"/>
        <end position="171"/>
    </location>
</feature>
<feature type="disulfide bond" evidence="1">
    <location>
        <begin position="298"/>
        <end position="322"/>
    </location>
</feature>
<feature type="disulfide bond" evidence="1">
    <location>
        <begin position="435"/>
        <end position="473"/>
    </location>
</feature>
<feature type="sequence conflict" description="In Ref. 5; EEE63042." evidence="7" ref="5">
    <original>V</original>
    <variation>L</variation>
    <location>
        <position position="646"/>
    </location>
</feature>
<organism>
    <name type="scientific">Oryza sativa subsp. japonica</name>
    <name type="common">Rice</name>
    <dbReference type="NCBI Taxonomy" id="39947"/>
    <lineage>
        <taxon>Eukaryota</taxon>
        <taxon>Viridiplantae</taxon>
        <taxon>Streptophyta</taxon>
        <taxon>Embryophyta</taxon>
        <taxon>Tracheophyta</taxon>
        <taxon>Spermatophyta</taxon>
        <taxon>Magnoliopsida</taxon>
        <taxon>Liliopsida</taxon>
        <taxon>Poales</taxon>
        <taxon>Poaceae</taxon>
        <taxon>BOP clade</taxon>
        <taxon>Oryzoideae</taxon>
        <taxon>Oryzeae</taxon>
        <taxon>Oryzinae</taxon>
        <taxon>Oryza</taxon>
        <taxon>Oryza sativa</taxon>
    </lineage>
</organism>
<evidence type="ECO:0000250" key="1">
    <source>
        <dbReference type="UniProtKB" id="A4GRC6"/>
    </source>
</evidence>
<evidence type="ECO:0000250" key="2">
    <source>
        <dbReference type="UniProtKB" id="F4JP36"/>
    </source>
</evidence>
<evidence type="ECO:0000255" key="3"/>
<evidence type="ECO:0000256" key="4">
    <source>
        <dbReference type="SAM" id="MobiDB-lite"/>
    </source>
</evidence>
<evidence type="ECO:0000269" key="5">
    <source>
    </source>
</evidence>
<evidence type="ECO:0000303" key="6">
    <source>
    </source>
</evidence>
<evidence type="ECO:0000305" key="7"/>
<protein>
    <recommendedName>
        <fullName>Protein HAPLESS 2-A</fullName>
    </recommendedName>
</protein>
<proteinExistence type="evidence at transcript level"/>